<accession>Q9SSX0</accession>
<accession>Q0JPC8</accession>
<feature type="chain" id="PRO_0000227570" description="Rac-like GTP-binding protein 1">
    <location>
        <begin position="1"/>
        <end position="214"/>
    </location>
</feature>
<feature type="short sequence motif" description="Effector region" evidence="2">
    <location>
        <begin position="39"/>
        <end position="47"/>
    </location>
</feature>
<feature type="binding site" evidence="1">
    <location>
        <begin position="17"/>
        <end position="24"/>
    </location>
    <ligand>
        <name>GTP</name>
        <dbReference type="ChEBI" id="CHEBI:37565"/>
    </ligand>
</feature>
<feature type="binding site" evidence="10 12">
    <location>
        <begin position="20"/>
        <end position="25"/>
    </location>
    <ligand>
        <name>GTP</name>
        <dbReference type="ChEBI" id="CHEBI:37565"/>
    </ligand>
</feature>
<feature type="binding site" evidence="10 12">
    <location>
        <position position="42"/>
    </location>
    <ligand>
        <name>GTP</name>
        <dbReference type="ChEBI" id="CHEBI:37565"/>
    </ligand>
</feature>
<feature type="binding site" evidence="1">
    <location>
        <begin position="64"/>
        <end position="68"/>
    </location>
    <ligand>
        <name>GTP</name>
        <dbReference type="ChEBI" id="CHEBI:37565"/>
    </ligand>
</feature>
<feature type="binding site" evidence="10 12">
    <location>
        <position position="67"/>
    </location>
    <ligand>
        <name>GTP</name>
        <dbReference type="ChEBI" id="CHEBI:37565"/>
    </ligand>
</feature>
<feature type="binding site" evidence="1">
    <location>
        <begin position="122"/>
        <end position="125"/>
    </location>
    <ligand>
        <name>GTP</name>
        <dbReference type="ChEBI" id="CHEBI:37565"/>
    </ligand>
</feature>
<feature type="binding site" evidence="10 12">
    <location>
        <begin position="123"/>
        <end position="125"/>
    </location>
    <ligand>
        <name>GTP</name>
        <dbReference type="ChEBI" id="CHEBI:37565"/>
    </ligand>
</feature>
<feature type="binding site" evidence="10 12">
    <location>
        <begin position="164"/>
        <end position="165"/>
    </location>
    <ligand>
        <name>GTP</name>
        <dbReference type="ChEBI" id="CHEBI:37565"/>
    </ligand>
</feature>
<feature type="mutagenesis site" description="Constitutively active." evidence="3">
    <original>G</original>
    <variation>V</variation>
    <location>
        <position position="19"/>
    </location>
</feature>
<feature type="mutagenesis site" description="Constitutively inactive." evidence="3">
    <original>T</original>
    <variation>N</variation>
    <location>
        <position position="24"/>
    </location>
</feature>
<feature type="mutagenesis site" description="Loss of membrane localization." evidence="4">
    <original>C</original>
    <variation>S</variation>
    <location>
        <position position="212"/>
    </location>
</feature>
<feature type="strand" evidence="13">
    <location>
        <begin position="9"/>
        <end position="18"/>
    </location>
</feature>
<feature type="helix" evidence="13">
    <location>
        <begin position="23"/>
        <end position="32"/>
    </location>
</feature>
<feature type="strand" evidence="13">
    <location>
        <begin position="46"/>
        <end position="53"/>
    </location>
</feature>
<feature type="strand" evidence="13">
    <location>
        <begin position="56"/>
        <end position="63"/>
    </location>
</feature>
<feature type="helix" evidence="13">
    <location>
        <begin position="69"/>
        <end position="71"/>
    </location>
</feature>
<feature type="turn" evidence="13">
    <location>
        <begin position="72"/>
        <end position="74"/>
    </location>
</feature>
<feature type="helix" evidence="13">
    <location>
        <begin position="75"/>
        <end position="79"/>
    </location>
</feature>
<feature type="strand" evidence="13">
    <location>
        <begin position="83"/>
        <end position="90"/>
    </location>
</feature>
<feature type="helix" evidence="13">
    <location>
        <begin position="94"/>
        <end position="102"/>
    </location>
</feature>
<feature type="helix" evidence="13">
    <location>
        <begin position="104"/>
        <end position="111"/>
    </location>
</feature>
<feature type="strand" evidence="13">
    <location>
        <begin position="117"/>
        <end position="122"/>
    </location>
</feature>
<feature type="helix" evidence="13">
    <location>
        <begin position="124"/>
        <end position="127"/>
    </location>
</feature>
<feature type="helix" evidence="13">
    <location>
        <begin position="130"/>
        <end position="134"/>
    </location>
</feature>
<feature type="helix" evidence="13">
    <location>
        <begin position="138"/>
        <end position="140"/>
    </location>
</feature>
<feature type="helix" evidence="13">
    <location>
        <begin position="144"/>
        <end position="154"/>
    </location>
</feature>
<feature type="strand" evidence="13">
    <location>
        <begin position="157"/>
        <end position="161"/>
    </location>
</feature>
<feature type="turn" evidence="13">
    <location>
        <begin position="164"/>
        <end position="167"/>
    </location>
</feature>
<feature type="helix" evidence="13">
    <location>
        <begin position="170"/>
        <end position="182"/>
    </location>
</feature>
<proteinExistence type="evidence at protein level"/>
<protein>
    <recommendedName>
        <fullName>Rac-like GTP-binding protein 1</fullName>
    </recommendedName>
    <alternativeName>
        <fullName>OsRac1</fullName>
    </alternativeName>
</protein>
<comment type="function">
    <text evidence="3 4 5 6 7">Small GTPase playing a general role in disease resistance signaling pathway. Acts downstream of heterotrimeric G protein alpha subunit. Regulates cell death and reactive oxygen species production, probably through NADPH oxidase. Also involved in sphingolipid elicitor (SE)-dependent defense signaling. Activates phytoalexin production and alters defense-related genes. Down-regulates metallothionein 2b, a reactive oxygen scavenger (PubMed:10485927, PubMed:11149940, PubMed:12237405, PubMed:15220467). May control lignin synthesis through regulation of both NADPH oxidase and CCR1 activities during defense responses. Stimulates lignin synthesis in suspension cell culture (PubMed:15951489).</text>
</comment>
<comment type="subunit">
    <text evidence="7 8 9">May interact with MPK1/MAPK6 (PubMed:15951489). Binds to RBOHB, preferentially in the GTP-bound form (PubMed:19864426). Interacts with CCR1 in a GTP-dependent manner (PubMed:16380417).</text>
</comment>
<comment type="interaction">
    <interactant intactId="EBI-15561891">
        <id>Q9SSX0</id>
    </interactant>
    <interactant intactId="EBI-15561872">
        <id>Q6K9A2</id>
        <label>CCR1</label>
    </interactant>
    <organismsDiffer>false</organismsDiffer>
    <experiments>3</experiments>
</comment>
<comment type="subcellular location">
    <subcellularLocation>
        <location evidence="4">Cytoplasm</location>
    </subcellularLocation>
    <subcellularLocation>
        <location evidence="4">Membrane</location>
        <topology evidence="4">Peripheral membrane protein</topology>
    </subcellularLocation>
    <text>Associated with the membrane when activated.</text>
</comment>
<comment type="PTM">
    <text>May be palmitoylated.</text>
</comment>
<comment type="similarity">
    <text evidence="11">Belongs to the small GTPase superfamily. Rho family.</text>
</comment>
<dbReference type="EMBL" id="AB029508">
    <property type="protein sequence ID" value="BAA84492.1"/>
    <property type="molecule type" value="mRNA"/>
</dbReference>
<dbReference type="EMBL" id="AP001859">
    <property type="status" value="NOT_ANNOTATED_CDS"/>
    <property type="molecule type" value="Genomic_DNA"/>
</dbReference>
<dbReference type="EMBL" id="AP008207">
    <property type="protein sequence ID" value="BAF04400.1"/>
    <property type="molecule type" value="Genomic_DNA"/>
</dbReference>
<dbReference type="EMBL" id="AP014957">
    <property type="protein sequence ID" value="BAS71158.1"/>
    <property type="molecule type" value="Genomic_DNA"/>
</dbReference>
<dbReference type="RefSeq" id="XP_015621645.1">
    <property type="nucleotide sequence ID" value="XM_015766159.1"/>
</dbReference>
<dbReference type="PDB" id="4U5X">
    <property type="method" value="X-ray"/>
    <property type="resolution" value="1.90 A"/>
    <property type="chains" value="A=8-183"/>
</dbReference>
<dbReference type="PDBsum" id="4U5X"/>
<dbReference type="SMR" id="Q9SSX0"/>
<dbReference type="DIP" id="DIP-61088N"/>
<dbReference type="FunCoup" id="Q9SSX0">
    <property type="interactions" value="1946"/>
</dbReference>
<dbReference type="IntAct" id="Q9SSX0">
    <property type="interactions" value="1"/>
</dbReference>
<dbReference type="STRING" id="39947.Q9SSX0"/>
<dbReference type="PaxDb" id="39947-Q9SSX0"/>
<dbReference type="EnsemblPlants" id="Os01t0229400-02">
    <property type="protein sequence ID" value="Os01t0229400-02"/>
    <property type="gene ID" value="Os01g0229400"/>
</dbReference>
<dbReference type="Gramene" id="Os01t0229400-02">
    <property type="protein sequence ID" value="Os01t0229400-02"/>
    <property type="gene ID" value="Os01g0229400"/>
</dbReference>
<dbReference type="KEGG" id="dosa:Os01g0229400"/>
<dbReference type="eggNOG" id="KOG0393">
    <property type="taxonomic scope" value="Eukaryota"/>
</dbReference>
<dbReference type="InParanoid" id="Q9SSX0"/>
<dbReference type="OrthoDB" id="8830751at2759"/>
<dbReference type="BRENDA" id="3.6.5.2">
    <property type="organism ID" value="4460"/>
</dbReference>
<dbReference type="PlantReactome" id="R-OSA-9611432">
    <property type="pathway name" value="Recognition of fungal and bacterial pathogens and immunity response"/>
</dbReference>
<dbReference type="EvolutionaryTrace" id="Q9SSX0"/>
<dbReference type="Proteomes" id="UP000000763">
    <property type="component" value="Chromosome 1"/>
</dbReference>
<dbReference type="Proteomes" id="UP000059680">
    <property type="component" value="Chromosome 1"/>
</dbReference>
<dbReference type="ExpressionAtlas" id="Q9SSX0">
    <property type="expression patterns" value="baseline and differential"/>
</dbReference>
<dbReference type="GO" id="GO:0042995">
    <property type="term" value="C:cell projection"/>
    <property type="evidence" value="ECO:0000318"/>
    <property type="project" value="GO_Central"/>
</dbReference>
<dbReference type="GO" id="GO:0031410">
    <property type="term" value="C:cytoplasmic vesicle"/>
    <property type="evidence" value="ECO:0000318"/>
    <property type="project" value="GO_Central"/>
</dbReference>
<dbReference type="GO" id="GO:0005856">
    <property type="term" value="C:cytoskeleton"/>
    <property type="evidence" value="ECO:0000318"/>
    <property type="project" value="GO_Central"/>
</dbReference>
<dbReference type="GO" id="GO:0005886">
    <property type="term" value="C:plasma membrane"/>
    <property type="evidence" value="ECO:0000318"/>
    <property type="project" value="GO_Central"/>
</dbReference>
<dbReference type="GO" id="GO:0019899">
    <property type="term" value="F:enzyme binding"/>
    <property type="evidence" value="ECO:0000353"/>
    <property type="project" value="UniProtKB"/>
</dbReference>
<dbReference type="GO" id="GO:0005525">
    <property type="term" value="F:GTP binding"/>
    <property type="evidence" value="ECO:0000314"/>
    <property type="project" value="UniProtKB"/>
</dbReference>
<dbReference type="GO" id="GO:0003924">
    <property type="term" value="F:GTPase activity"/>
    <property type="evidence" value="ECO:0000318"/>
    <property type="project" value="GO_Central"/>
</dbReference>
<dbReference type="GO" id="GO:0019901">
    <property type="term" value="F:protein kinase binding"/>
    <property type="evidence" value="ECO:0000318"/>
    <property type="project" value="GO_Central"/>
</dbReference>
<dbReference type="GO" id="GO:0007015">
    <property type="term" value="P:actin filament organization"/>
    <property type="evidence" value="ECO:0000318"/>
    <property type="project" value="GO_Central"/>
</dbReference>
<dbReference type="GO" id="GO:0030865">
    <property type="term" value="P:cortical cytoskeleton organization"/>
    <property type="evidence" value="ECO:0000318"/>
    <property type="project" value="GO_Central"/>
</dbReference>
<dbReference type="GO" id="GO:0006952">
    <property type="term" value="P:defense response"/>
    <property type="evidence" value="ECO:0007669"/>
    <property type="project" value="UniProtKB-KW"/>
</dbReference>
<dbReference type="GO" id="GO:0007163">
    <property type="term" value="P:establishment or maintenance of cell polarity"/>
    <property type="evidence" value="ECO:0000318"/>
    <property type="project" value="GO_Central"/>
</dbReference>
<dbReference type="GO" id="GO:0032956">
    <property type="term" value="P:regulation of actin cytoskeleton organization"/>
    <property type="evidence" value="ECO:0000318"/>
    <property type="project" value="GO_Central"/>
</dbReference>
<dbReference type="GO" id="GO:0008360">
    <property type="term" value="P:regulation of cell shape"/>
    <property type="evidence" value="ECO:0000318"/>
    <property type="project" value="GO_Central"/>
</dbReference>
<dbReference type="GO" id="GO:0007165">
    <property type="term" value="P:signal transduction"/>
    <property type="evidence" value="ECO:0000318"/>
    <property type="project" value="GO_Central"/>
</dbReference>
<dbReference type="GO" id="GO:0007264">
    <property type="term" value="P:small GTPase-mediated signal transduction"/>
    <property type="evidence" value="ECO:0007669"/>
    <property type="project" value="InterPro"/>
</dbReference>
<dbReference type="CDD" id="cd04133">
    <property type="entry name" value="Rop_like"/>
    <property type="match status" value="1"/>
</dbReference>
<dbReference type="FunFam" id="3.40.50.300:FF:000797">
    <property type="entry name" value="Rac-like GTP-binding protein ARAC7"/>
    <property type="match status" value="1"/>
</dbReference>
<dbReference type="Gene3D" id="3.40.50.300">
    <property type="entry name" value="P-loop containing nucleotide triphosphate hydrolases"/>
    <property type="match status" value="1"/>
</dbReference>
<dbReference type="InterPro" id="IPR027417">
    <property type="entry name" value="P-loop_NTPase"/>
</dbReference>
<dbReference type="InterPro" id="IPR005225">
    <property type="entry name" value="Small_GTP-bd"/>
</dbReference>
<dbReference type="InterPro" id="IPR001806">
    <property type="entry name" value="Small_GTPase"/>
</dbReference>
<dbReference type="InterPro" id="IPR003578">
    <property type="entry name" value="Small_GTPase_Rho"/>
</dbReference>
<dbReference type="NCBIfam" id="TIGR00231">
    <property type="entry name" value="small_GTP"/>
    <property type="match status" value="1"/>
</dbReference>
<dbReference type="PANTHER" id="PTHR24072">
    <property type="entry name" value="RHO FAMILY GTPASE"/>
    <property type="match status" value="1"/>
</dbReference>
<dbReference type="Pfam" id="PF00071">
    <property type="entry name" value="Ras"/>
    <property type="match status" value="1"/>
</dbReference>
<dbReference type="PRINTS" id="PR00449">
    <property type="entry name" value="RASTRNSFRMNG"/>
</dbReference>
<dbReference type="SMART" id="SM00175">
    <property type="entry name" value="RAB"/>
    <property type="match status" value="1"/>
</dbReference>
<dbReference type="SMART" id="SM00173">
    <property type="entry name" value="RAS"/>
    <property type="match status" value="1"/>
</dbReference>
<dbReference type="SMART" id="SM00174">
    <property type="entry name" value="RHO"/>
    <property type="match status" value="1"/>
</dbReference>
<dbReference type="SUPFAM" id="SSF52540">
    <property type="entry name" value="P-loop containing nucleoside triphosphate hydrolases"/>
    <property type="match status" value="1"/>
</dbReference>
<dbReference type="PROSITE" id="PS51420">
    <property type="entry name" value="RHO"/>
    <property type="match status" value="1"/>
</dbReference>
<gene>
    <name type="primary">RAC1</name>
    <name type="ordered locus">Os01g0229400</name>
    <name type="ordered locus">LOC_Os01g12900</name>
</gene>
<evidence type="ECO:0000250" key="1"/>
<evidence type="ECO:0000255" key="2"/>
<evidence type="ECO:0000269" key="3">
    <source>
    </source>
</evidence>
<evidence type="ECO:0000269" key="4">
    <source>
    </source>
</evidence>
<evidence type="ECO:0000269" key="5">
    <source>
    </source>
</evidence>
<evidence type="ECO:0000269" key="6">
    <source>
    </source>
</evidence>
<evidence type="ECO:0000269" key="7">
    <source>
    </source>
</evidence>
<evidence type="ECO:0000269" key="8">
    <source>
    </source>
</evidence>
<evidence type="ECO:0000269" key="9">
    <source>
    </source>
</evidence>
<evidence type="ECO:0000269" key="10">
    <source>
    </source>
</evidence>
<evidence type="ECO:0000305" key="11"/>
<evidence type="ECO:0007744" key="12">
    <source>
        <dbReference type="PDB" id="4U5X"/>
    </source>
</evidence>
<evidence type="ECO:0007829" key="13">
    <source>
        <dbReference type="PDB" id="4U5X"/>
    </source>
</evidence>
<sequence>MSSAAAATRFIKCVTVGDGAVGKTCMLICYTCNKFPTDYIPTVFDNFSANVSVDGSVVNLGLWDTAGQEDYSRLRPLSYRGADVFILSFSLISRASYENVQKKWMPELRRFAPGVPVVLVGTKLDLREDRAYLADHPASSIITTEQGEELRKLIGAVAYIECSSKTQRNIKAVFDTAIKVVLQPPRHKDVTRKKLQSSSNRPVRRYFCGSACFA</sequence>
<name>RAC1_ORYSJ</name>
<organism>
    <name type="scientific">Oryza sativa subsp. japonica</name>
    <name type="common">Rice</name>
    <dbReference type="NCBI Taxonomy" id="39947"/>
    <lineage>
        <taxon>Eukaryota</taxon>
        <taxon>Viridiplantae</taxon>
        <taxon>Streptophyta</taxon>
        <taxon>Embryophyta</taxon>
        <taxon>Tracheophyta</taxon>
        <taxon>Spermatophyta</taxon>
        <taxon>Magnoliopsida</taxon>
        <taxon>Liliopsida</taxon>
        <taxon>Poales</taxon>
        <taxon>Poaceae</taxon>
        <taxon>BOP clade</taxon>
        <taxon>Oryzoideae</taxon>
        <taxon>Oryzeae</taxon>
        <taxon>Oryzinae</taxon>
        <taxon>Oryza</taxon>
        <taxon>Oryza sativa</taxon>
    </lineage>
</organism>
<keyword id="KW-0002">3D-structure</keyword>
<keyword id="KW-0053">Apoptosis</keyword>
<keyword id="KW-0963">Cytoplasm</keyword>
<keyword id="KW-0342">GTP-binding</keyword>
<keyword id="KW-0449">Lipoprotein</keyword>
<keyword id="KW-0472">Membrane</keyword>
<keyword id="KW-0547">Nucleotide-binding</keyword>
<keyword id="KW-0564">Palmitate</keyword>
<keyword id="KW-0611">Plant defense</keyword>
<keyword id="KW-1185">Reference proteome</keyword>
<reference key="1">
    <citation type="journal article" date="1999" name="Proc. Natl. Acad. Sci. U.S.A.">
        <title>The small GTP-binding protein Rac is a regulator of cell death in plants.</title>
        <authorList>
            <person name="Kawasaki T."/>
            <person name="Henmi K."/>
            <person name="Ono E."/>
            <person name="Hatakeyama S."/>
            <person name="Iwano M."/>
            <person name="Satoh H."/>
            <person name="Shimamoto K."/>
        </authorList>
    </citation>
    <scope>NUCLEOTIDE SEQUENCE [MRNA]</scope>
    <scope>FUNCTION</scope>
    <scope>MUTAGENESIS OF GLY-19 AND THR-24</scope>
</reference>
<reference key="2">
    <citation type="journal article" date="2002" name="Nature">
        <title>The genome sequence and structure of rice chromosome 1.</title>
        <authorList>
            <person name="Sasaki T."/>
            <person name="Matsumoto T."/>
            <person name="Yamamoto K."/>
            <person name="Sakata K."/>
            <person name="Baba T."/>
            <person name="Katayose Y."/>
            <person name="Wu J."/>
            <person name="Niimura Y."/>
            <person name="Cheng Z."/>
            <person name="Nagamura Y."/>
            <person name="Antonio B.A."/>
            <person name="Kanamori H."/>
            <person name="Hosokawa S."/>
            <person name="Masukawa M."/>
            <person name="Arikawa K."/>
            <person name="Chiden Y."/>
            <person name="Hayashi M."/>
            <person name="Okamoto M."/>
            <person name="Ando T."/>
            <person name="Aoki H."/>
            <person name="Arita K."/>
            <person name="Hamada M."/>
            <person name="Harada C."/>
            <person name="Hijishita S."/>
            <person name="Honda M."/>
            <person name="Ichikawa Y."/>
            <person name="Idonuma A."/>
            <person name="Iijima M."/>
            <person name="Ikeda M."/>
            <person name="Ikeno M."/>
            <person name="Ito S."/>
            <person name="Ito T."/>
            <person name="Ito Y."/>
            <person name="Ito Y."/>
            <person name="Iwabuchi A."/>
            <person name="Kamiya K."/>
            <person name="Karasawa W."/>
            <person name="Katagiri S."/>
            <person name="Kikuta A."/>
            <person name="Kobayashi N."/>
            <person name="Kono I."/>
            <person name="Machita K."/>
            <person name="Maehara T."/>
            <person name="Mizuno H."/>
            <person name="Mizubayashi T."/>
            <person name="Mukai Y."/>
            <person name="Nagasaki H."/>
            <person name="Nakashima M."/>
            <person name="Nakama Y."/>
            <person name="Nakamichi Y."/>
            <person name="Nakamura M."/>
            <person name="Namiki N."/>
            <person name="Negishi M."/>
            <person name="Ohta I."/>
            <person name="Ono N."/>
            <person name="Saji S."/>
            <person name="Sakai K."/>
            <person name="Shibata M."/>
            <person name="Shimokawa T."/>
            <person name="Shomura A."/>
            <person name="Song J."/>
            <person name="Takazaki Y."/>
            <person name="Terasawa K."/>
            <person name="Tsuji K."/>
            <person name="Waki K."/>
            <person name="Yamagata H."/>
            <person name="Yamane H."/>
            <person name="Yoshiki S."/>
            <person name="Yoshihara R."/>
            <person name="Yukawa K."/>
            <person name="Zhong H."/>
            <person name="Iwama H."/>
            <person name="Endo T."/>
            <person name="Ito H."/>
            <person name="Hahn J.H."/>
            <person name="Kim H.-I."/>
            <person name="Eun M.-Y."/>
            <person name="Yano M."/>
            <person name="Jiang J."/>
            <person name="Gojobori T."/>
        </authorList>
    </citation>
    <scope>NUCLEOTIDE SEQUENCE [LARGE SCALE GENOMIC DNA]</scope>
    <source>
        <strain>cv. Nipponbare</strain>
    </source>
</reference>
<reference key="3">
    <citation type="journal article" date="2005" name="Nature">
        <title>The map-based sequence of the rice genome.</title>
        <authorList>
            <consortium name="International rice genome sequencing project (IRGSP)"/>
        </authorList>
    </citation>
    <scope>NUCLEOTIDE SEQUENCE [LARGE SCALE GENOMIC DNA]</scope>
    <source>
        <strain>cv. Nipponbare</strain>
    </source>
</reference>
<reference key="4">
    <citation type="journal article" date="2008" name="Nucleic Acids Res.">
        <title>The rice annotation project database (RAP-DB): 2008 update.</title>
        <authorList>
            <consortium name="The rice annotation project (RAP)"/>
        </authorList>
    </citation>
    <scope>GENOME REANNOTATION</scope>
    <source>
        <strain>cv. Nipponbare</strain>
    </source>
</reference>
<reference key="5">
    <citation type="journal article" date="2013" name="Rice">
        <title>Improvement of the Oryza sativa Nipponbare reference genome using next generation sequence and optical map data.</title>
        <authorList>
            <person name="Kawahara Y."/>
            <person name="de la Bastide M."/>
            <person name="Hamilton J.P."/>
            <person name="Kanamori H."/>
            <person name="McCombie W.R."/>
            <person name="Ouyang S."/>
            <person name="Schwartz D.C."/>
            <person name="Tanaka T."/>
            <person name="Wu J."/>
            <person name="Zhou S."/>
            <person name="Childs K.L."/>
            <person name="Davidson R.M."/>
            <person name="Lin H."/>
            <person name="Quesada-Ocampo L."/>
            <person name="Vaillancourt B."/>
            <person name="Sakai H."/>
            <person name="Lee S.S."/>
            <person name="Kim J."/>
            <person name="Numa H."/>
            <person name="Itoh T."/>
            <person name="Buell C.R."/>
            <person name="Matsumoto T."/>
        </authorList>
    </citation>
    <scope>GENOME REANNOTATION</scope>
    <source>
        <strain>cv. Nipponbare</strain>
    </source>
</reference>
<reference key="6">
    <citation type="journal article" date="2001" name="Proc. Natl. Acad. Sci. U.S.A.">
        <title>Essential role of the small GTPase Rac in disease resistance of rice.</title>
        <authorList>
            <person name="Ono E."/>
            <person name="Wong H.L."/>
            <person name="Kawasaki T."/>
            <person name="Hasegawa M."/>
            <person name="Kodama O."/>
            <person name="Shimamoto K."/>
        </authorList>
    </citation>
    <scope>FUNCTION</scope>
    <scope>SUBCELLULAR LOCATION</scope>
    <scope>MUTAGENESIS OF CYS-212</scope>
</reference>
<reference key="7">
    <citation type="journal article" date="2002" name="Proc. Natl. Acad. Sci. U.S.A.">
        <title>The heterotrimeric G protein alpha subunit acts upstream of the small GTPase Rac in disease resistance of rice.</title>
        <authorList>
            <person name="Suharsono U."/>
            <person name="Fujisawa Y."/>
            <person name="Kawasaki T."/>
            <person name="Iwasaki Y."/>
            <person name="Satoh H."/>
            <person name="Shimamoto K."/>
        </authorList>
    </citation>
    <scope>FUNCTION</scope>
</reference>
<reference key="8">
    <citation type="journal article" date="2004" name="Plant Physiol.">
        <title>Down-regulation of metallothionein, a reactive oxygen scavenger, by the small GTPase OsRac1 in rice.</title>
        <authorList>
            <person name="Wong H.L."/>
            <person name="Sakamoto T."/>
            <person name="Kawasaki T."/>
            <person name="Umemura K."/>
            <person name="Shimamoto K."/>
        </authorList>
    </citation>
    <scope>FUNCTION</scope>
</reference>
<reference key="9">
    <citation type="journal article" date="2005" name="Plant Physiol.">
        <title>A sphingolipid elicitor-inducible mitogen-activated protein kinase is regulated by the small GTPase OsRac1 and heterotrimeric G-protein in rice.</title>
        <authorList>
            <person name="Lieberherr D."/>
            <person name="Thao N.P."/>
            <person name="Nakashima A."/>
            <person name="Umemura K."/>
            <person name="Kawasaki T."/>
            <person name="Shimamoto K."/>
        </authorList>
    </citation>
    <scope>INTERACTION WITH MPK1/MAPK6</scope>
</reference>
<reference key="10">
    <citation type="journal article" date="2006" name="Proc. Natl. Acad. Sci. U.S.A.">
        <title>Cinnamoyl-CoA reductase, a key enzyme in lignin biosynthesis, is an effector of small GTPase Rac in defense signaling in rice.</title>
        <authorList>
            <person name="Kawasaki T."/>
            <person name="Koita H."/>
            <person name="Nakatsubo T."/>
            <person name="Hasegawa K."/>
            <person name="Wakabayashi K."/>
            <person name="Takahashi H."/>
            <person name="Umemura K."/>
            <person name="Umezawa T."/>
            <person name="Shimamoto K."/>
        </authorList>
    </citation>
    <scope>FUNCTION</scope>
    <scope>INTERACTION WITH CCR1</scope>
</reference>
<reference key="11">
    <citation type="journal article" date="2005" name="Plant Physiol.">
        <title>RNA silencing of single and multiple members in a gene family of rice.</title>
        <authorList>
            <person name="Miki D."/>
            <person name="Itoh R."/>
            <person name="Shimamoto K."/>
        </authorList>
    </citation>
    <scope>NOMENCLATURE</scope>
</reference>
<reference key="12">
    <citation type="journal article" date="2010" name="J. Biol. Chem.">
        <title>Structure of the N-terminal regulatory domain of a plant NADPH oxidase and its functional implications.</title>
        <authorList>
            <person name="Oda T."/>
            <person name="Hashimoto H."/>
            <person name="Kuwabara N."/>
            <person name="Akashi S."/>
            <person name="Hayashi K."/>
            <person name="Kojima C."/>
            <person name="Wong H.L."/>
            <person name="Kawasaki T."/>
            <person name="Shimamoto K."/>
            <person name="Sato M."/>
            <person name="Shimizu T."/>
        </authorList>
    </citation>
    <scope>INTERACTION WITH RBOHB</scope>
</reference>
<reference key="13">
    <citation type="journal article" date="2014" name="J. Biol. Chem.">
        <title>The crystal structure of the plant small GTPase OsRac1 reveals its mode of binding to NADPH oxidase.</title>
        <authorList>
            <person name="Kosami K."/>
            <person name="Ohki I."/>
            <person name="Nagano M."/>
            <person name="Furuita K."/>
            <person name="Sugiki T."/>
            <person name="Kawano Y."/>
            <person name="Kawasaki T."/>
            <person name="Fujiwara T."/>
            <person name="Nakagawa A."/>
            <person name="Shimamoto K."/>
            <person name="Kojima C."/>
        </authorList>
    </citation>
    <scope>X-RAY CRYSTALLOGRAPHY (1.90 ANGSTROMS) OF 8-183 IN COMPLEX WITH GTP</scope>
</reference>